<reference key="1">
    <citation type="journal article" date="2008" name="Foodborne Pathog. Dis.">
        <title>The complete genome sequence and analysis of the human pathogen Campylobacter lari.</title>
        <authorList>
            <person name="Miller W.G."/>
            <person name="Wang G."/>
            <person name="Binnewies T.T."/>
            <person name="Parker C.T."/>
        </authorList>
    </citation>
    <scope>NUCLEOTIDE SEQUENCE [LARGE SCALE GENOMIC DNA]</scope>
    <source>
        <strain>RM2100 / D67 / ATCC BAA-1060</strain>
    </source>
</reference>
<sequence>MQEKFEQSVKNMLEIIGENPQREGLLKTPTRVFKAFEFLNSGYKQDPKQILNDALFESSNNEMVLVRDIEFYSLCEHHLLPFFGRVHVAYIPDKKVVGLSKIPRLVEVFARRLQIQEQLTEQIAEALMEHVGAKGVGVVIEARHMCVEMRGVQKANSTTSTSALRGSFLKSEKTRKEFFTLINSAKQVRF</sequence>
<comment type="catalytic activity">
    <reaction evidence="1">
        <text>GTP + H2O = 7,8-dihydroneopterin 3'-triphosphate + formate + H(+)</text>
        <dbReference type="Rhea" id="RHEA:17473"/>
        <dbReference type="ChEBI" id="CHEBI:15377"/>
        <dbReference type="ChEBI" id="CHEBI:15378"/>
        <dbReference type="ChEBI" id="CHEBI:15740"/>
        <dbReference type="ChEBI" id="CHEBI:37565"/>
        <dbReference type="ChEBI" id="CHEBI:58462"/>
        <dbReference type="EC" id="3.5.4.16"/>
    </reaction>
</comment>
<comment type="pathway">
    <text evidence="1">Cofactor biosynthesis; 7,8-dihydroneopterin triphosphate biosynthesis; 7,8-dihydroneopterin triphosphate from GTP: step 1/1.</text>
</comment>
<comment type="subunit">
    <text evidence="1">Homomer.</text>
</comment>
<comment type="similarity">
    <text evidence="1">Belongs to the GTP cyclohydrolase I family.</text>
</comment>
<accession>B9KDZ8</accession>
<proteinExistence type="inferred from homology"/>
<keyword id="KW-0342">GTP-binding</keyword>
<keyword id="KW-0378">Hydrolase</keyword>
<keyword id="KW-0479">Metal-binding</keyword>
<keyword id="KW-0547">Nucleotide-binding</keyword>
<keyword id="KW-0554">One-carbon metabolism</keyword>
<keyword id="KW-1185">Reference proteome</keyword>
<keyword id="KW-0862">Zinc</keyword>
<organism>
    <name type="scientific">Campylobacter lari (strain RM2100 / D67 / ATCC BAA-1060)</name>
    <dbReference type="NCBI Taxonomy" id="306263"/>
    <lineage>
        <taxon>Bacteria</taxon>
        <taxon>Pseudomonadati</taxon>
        <taxon>Campylobacterota</taxon>
        <taxon>Epsilonproteobacteria</taxon>
        <taxon>Campylobacterales</taxon>
        <taxon>Campylobacteraceae</taxon>
        <taxon>Campylobacter</taxon>
    </lineage>
</organism>
<evidence type="ECO:0000255" key="1">
    <source>
        <dbReference type="HAMAP-Rule" id="MF_00223"/>
    </source>
</evidence>
<dbReference type="EC" id="3.5.4.16" evidence="1"/>
<dbReference type="EMBL" id="CP000932">
    <property type="protein sequence ID" value="ACM64786.1"/>
    <property type="molecule type" value="Genomic_DNA"/>
</dbReference>
<dbReference type="RefSeq" id="WP_012662169.1">
    <property type="nucleotide sequence ID" value="NC_012039.1"/>
</dbReference>
<dbReference type="SMR" id="B9KDZ8"/>
<dbReference type="STRING" id="306263.Cla_1481"/>
<dbReference type="GeneID" id="93005509"/>
<dbReference type="KEGG" id="cla:CLA_1481"/>
<dbReference type="eggNOG" id="COG0302">
    <property type="taxonomic scope" value="Bacteria"/>
</dbReference>
<dbReference type="HOGENOM" id="CLU_049768_3_4_7"/>
<dbReference type="UniPathway" id="UPA00848">
    <property type="reaction ID" value="UER00151"/>
</dbReference>
<dbReference type="Proteomes" id="UP000007727">
    <property type="component" value="Chromosome"/>
</dbReference>
<dbReference type="GO" id="GO:0005737">
    <property type="term" value="C:cytoplasm"/>
    <property type="evidence" value="ECO:0007669"/>
    <property type="project" value="TreeGrafter"/>
</dbReference>
<dbReference type="GO" id="GO:0005525">
    <property type="term" value="F:GTP binding"/>
    <property type="evidence" value="ECO:0007669"/>
    <property type="project" value="UniProtKB-KW"/>
</dbReference>
<dbReference type="GO" id="GO:0003934">
    <property type="term" value="F:GTP cyclohydrolase I activity"/>
    <property type="evidence" value="ECO:0007669"/>
    <property type="project" value="UniProtKB-UniRule"/>
</dbReference>
<dbReference type="GO" id="GO:0008270">
    <property type="term" value="F:zinc ion binding"/>
    <property type="evidence" value="ECO:0007669"/>
    <property type="project" value="UniProtKB-UniRule"/>
</dbReference>
<dbReference type="GO" id="GO:0006730">
    <property type="term" value="P:one-carbon metabolic process"/>
    <property type="evidence" value="ECO:0007669"/>
    <property type="project" value="UniProtKB-UniRule"/>
</dbReference>
<dbReference type="GO" id="GO:0006729">
    <property type="term" value="P:tetrahydrobiopterin biosynthetic process"/>
    <property type="evidence" value="ECO:0007669"/>
    <property type="project" value="TreeGrafter"/>
</dbReference>
<dbReference type="GO" id="GO:0046654">
    <property type="term" value="P:tetrahydrofolate biosynthetic process"/>
    <property type="evidence" value="ECO:0007669"/>
    <property type="project" value="UniProtKB-UniRule"/>
</dbReference>
<dbReference type="FunFam" id="3.30.1130.10:FF:000001">
    <property type="entry name" value="GTP cyclohydrolase 1"/>
    <property type="match status" value="1"/>
</dbReference>
<dbReference type="Gene3D" id="1.10.286.10">
    <property type="match status" value="1"/>
</dbReference>
<dbReference type="Gene3D" id="3.30.1130.10">
    <property type="match status" value="1"/>
</dbReference>
<dbReference type="HAMAP" id="MF_00223">
    <property type="entry name" value="FolE"/>
    <property type="match status" value="1"/>
</dbReference>
<dbReference type="InterPro" id="IPR043133">
    <property type="entry name" value="GTP-CH-I_C/QueF"/>
</dbReference>
<dbReference type="InterPro" id="IPR043134">
    <property type="entry name" value="GTP-CH-I_N"/>
</dbReference>
<dbReference type="InterPro" id="IPR001474">
    <property type="entry name" value="GTP_CycHdrlase_I"/>
</dbReference>
<dbReference type="InterPro" id="IPR018234">
    <property type="entry name" value="GTP_CycHdrlase_I_CS"/>
</dbReference>
<dbReference type="InterPro" id="IPR020602">
    <property type="entry name" value="GTP_CycHdrlase_I_dom"/>
</dbReference>
<dbReference type="NCBIfam" id="TIGR00063">
    <property type="entry name" value="folE"/>
    <property type="match status" value="1"/>
</dbReference>
<dbReference type="NCBIfam" id="NF006825">
    <property type="entry name" value="PRK09347.1-2"/>
    <property type="match status" value="1"/>
</dbReference>
<dbReference type="NCBIfam" id="NF006826">
    <property type="entry name" value="PRK09347.1-3"/>
    <property type="match status" value="1"/>
</dbReference>
<dbReference type="PANTHER" id="PTHR11109:SF7">
    <property type="entry name" value="GTP CYCLOHYDROLASE 1"/>
    <property type="match status" value="1"/>
</dbReference>
<dbReference type="PANTHER" id="PTHR11109">
    <property type="entry name" value="GTP CYCLOHYDROLASE I"/>
    <property type="match status" value="1"/>
</dbReference>
<dbReference type="Pfam" id="PF01227">
    <property type="entry name" value="GTP_cyclohydroI"/>
    <property type="match status" value="1"/>
</dbReference>
<dbReference type="SUPFAM" id="SSF55620">
    <property type="entry name" value="Tetrahydrobiopterin biosynthesis enzymes-like"/>
    <property type="match status" value="1"/>
</dbReference>
<dbReference type="PROSITE" id="PS00859">
    <property type="entry name" value="GTP_CYCLOHYDROL_1_1"/>
    <property type="match status" value="1"/>
</dbReference>
<feature type="chain" id="PRO_1000124912" description="GTP cyclohydrolase 1">
    <location>
        <begin position="1"/>
        <end position="190"/>
    </location>
</feature>
<feature type="binding site" evidence="1">
    <location>
        <position position="75"/>
    </location>
    <ligand>
        <name>Zn(2+)</name>
        <dbReference type="ChEBI" id="CHEBI:29105"/>
    </ligand>
</feature>
<feature type="binding site" evidence="1">
    <location>
        <position position="78"/>
    </location>
    <ligand>
        <name>Zn(2+)</name>
        <dbReference type="ChEBI" id="CHEBI:29105"/>
    </ligand>
</feature>
<feature type="binding site" evidence="1">
    <location>
        <position position="146"/>
    </location>
    <ligand>
        <name>Zn(2+)</name>
        <dbReference type="ChEBI" id="CHEBI:29105"/>
    </ligand>
</feature>
<gene>
    <name evidence="1" type="primary">folE</name>
    <name type="ordered locus">Cla_1481</name>
</gene>
<protein>
    <recommendedName>
        <fullName evidence="1">GTP cyclohydrolase 1</fullName>
        <ecNumber evidence="1">3.5.4.16</ecNumber>
    </recommendedName>
    <alternativeName>
        <fullName evidence="1">GTP cyclohydrolase I</fullName>
        <shortName evidence="1">GTP-CH-I</shortName>
    </alternativeName>
</protein>
<name>GCH1_CAMLR</name>